<organism>
    <name type="scientific">Staphylococcus aureus (strain NCTC 8325 / PS 47)</name>
    <dbReference type="NCBI Taxonomy" id="93061"/>
    <lineage>
        <taxon>Bacteria</taxon>
        <taxon>Bacillati</taxon>
        <taxon>Bacillota</taxon>
        <taxon>Bacilli</taxon>
        <taxon>Bacillales</taxon>
        <taxon>Staphylococcaceae</taxon>
        <taxon>Staphylococcus</taxon>
    </lineage>
</organism>
<keyword id="KW-0963">Cytoplasm</keyword>
<keyword id="KW-0255">Endonuclease</keyword>
<keyword id="KW-0378">Hydrolase</keyword>
<keyword id="KW-0460">Magnesium</keyword>
<keyword id="KW-0540">Nuclease</keyword>
<keyword id="KW-1185">Reference proteome</keyword>
<keyword id="KW-0690">Ribosome biogenesis</keyword>
<keyword id="KW-0694">RNA-binding</keyword>
<keyword id="KW-0698">rRNA processing</keyword>
<keyword id="KW-0699">rRNA-binding</keyword>
<name>MRNC_STAA8</name>
<accession>Q2G2M4</accession>
<reference key="1">
    <citation type="book" date="2006" name="Gram positive pathogens, 2nd edition">
        <title>The Staphylococcus aureus NCTC 8325 genome.</title>
        <editorList>
            <person name="Fischetti V."/>
            <person name="Novick R."/>
            <person name="Ferretti J."/>
            <person name="Portnoy D."/>
            <person name="Rood J."/>
        </editorList>
        <authorList>
            <person name="Gillaspy A.F."/>
            <person name="Worrell V."/>
            <person name="Orvis J."/>
            <person name="Roe B.A."/>
            <person name="Dyer D.W."/>
            <person name="Iandolo J.J."/>
        </authorList>
    </citation>
    <scope>NUCLEOTIDE SEQUENCE [LARGE SCALE GENOMIC DNA]</scope>
    <source>
        <strain>NCTC 8325 / PS 47</strain>
    </source>
</reference>
<proteinExistence type="inferred from homology"/>
<evidence type="ECO:0000255" key="1">
    <source>
        <dbReference type="HAMAP-Rule" id="MF_01468"/>
    </source>
</evidence>
<feature type="chain" id="PRO_0000415991" description="Mini-ribonuclease 3">
    <location>
        <begin position="1"/>
        <end position="134"/>
    </location>
</feature>
<feature type="active site" evidence="1">
    <location>
        <position position="22"/>
    </location>
</feature>
<sequence>MDNQQDNHIKLLNPLTLAYMGDAVLDQYVRTYIVLKLKSKPNKLHQMSKKYVSAKSQAQTLEYLMEQEWFTDEEMDILKRGRNAKSHTKAKNTDVQTYRKSSAIEAVIGFLYLEKREERLEALLNKIITIVNER</sequence>
<protein>
    <recommendedName>
        <fullName evidence="1">Mini-ribonuclease 3</fullName>
        <shortName evidence="1">Mini-3</shortName>
        <shortName evidence="1">Mini-RNase 3</shortName>
        <ecNumber evidence="1">3.1.26.-</ecNumber>
    </recommendedName>
    <alternativeName>
        <fullName evidence="1">Mini-RNase III</fullName>
        <shortName evidence="1">Mini-III</shortName>
    </alternativeName>
</protein>
<comment type="function">
    <text evidence="1">Involved in correct processing of both the 5' and 3' ends of 23S rRNA precursor. Processes 30S rRNA precursor transcript even in absence of ribonuclease 3 (Rnc); Rnc processes 30S rRNA into smaller rRNA precursors.</text>
</comment>
<comment type="cofactor">
    <cofactor evidence="1">
        <name>Mg(2+)</name>
        <dbReference type="ChEBI" id="CHEBI:18420"/>
    </cofactor>
</comment>
<comment type="subunit">
    <text evidence="1">Homodimer.</text>
</comment>
<comment type="subcellular location">
    <subcellularLocation>
        <location evidence="1">Cytoplasm</location>
    </subcellularLocation>
</comment>
<comment type="similarity">
    <text evidence="1">Belongs to the MrnC RNase family.</text>
</comment>
<gene>
    <name evidence="1" type="primary">mrnC</name>
    <name type="ordered locus">SAOUHSC_00512</name>
</gene>
<dbReference type="EC" id="3.1.26.-" evidence="1"/>
<dbReference type="EMBL" id="CP000253">
    <property type="protein sequence ID" value="ABD29661.1"/>
    <property type="molecule type" value="Genomic_DNA"/>
</dbReference>
<dbReference type="RefSeq" id="WP_000370182.1">
    <property type="nucleotide sequence ID" value="NZ_LS483365.1"/>
</dbReference>
<dbReference type="RefSeq" id="YP_499085.1">
    <property type="nucleotide sequence ID" value="NC_007795.1"/>
</dbReference>
<dbReference type="SMR" id="Q2G2M4"/>
<dbReference type="STRING" id="93061.SAOUHSC_00512"/>
<dbReference type="PaxDb" id="1280-SAXN108_0584"/>
<dbReference type="GeneID" id="3920424"/>
<dbReference type="KEGG" id="sao:SAOUHSC_00512"/>
<dbReference type="PATRIC" id="fig|93061.5.peg.458"/>
<dbReference type="eggNOG" id="COG1939">
    <property type="taxonomic scope" value="Bacteria"/>
</dbReference>
<dbReference type="HOGENOM" id="CLU_091169_2_0_9"/>
<dbReference type="OrthoDB" id="46571at2"/>
<dbReference type="Proteomes" id="UP000008816">
    <property type="component" value="Chromosome"/>
</dbReference>
<dbReference type="GO" id="GO:0005737">
    <property type="term" value="C:cytoplasm"/>
    <property type="evidence" value="ECO:0007669"/>
    <property type="project" value="UniProtKB-SubCell"/>
</dbReference>
<dbReference type="GO" id="GO:0004525">
    <property type="term" value="F:ribonuclease III activity"/>
    <property type="evidence" value="ECO:0007669"/>
    <property type="project" value="InterPro"/>
</dbReference>
<dbReference type="GO" id="GO:0019843">
    <property type="term" value="F:rRNA binding"/>
    <property type="evidence" value="ECO:0007669"/>
    <property type="project" value="UniProtKB-UniRule"/>
</dbReference>
<dbReference type="GO" id="GO:0006364">
    <property type="term" value="P:rRNA processing"/>
    <property type="evidence" value="ECO:0007669"/>
    <property type="project" value="UniProtKB-UniRule"/>
</dbReference>
<dbReference type="CDD" id="cd00593">
    <property type="entry name" value="RIBOc"/>
    <property type="match status" value="1"/>
</dbReference>
<dbReference type="Gene3D" id="1.10.1520.10">
    <property type="entry name" value="Ribonuclease III domain"/>
    <property type="match status" value="1"/>
</dbReference>
<dbReference type="HAMAP" id="MF_01468">
    <property type="entry name" value="RNase_Mini_III"/>
    <property type="match status" value="1"/>
</dbReference>
<dbReference type="InterPro" id="IPR008226">
    <property type="entry name" value="Mini3_fam"/>
</dbReference>
<dbReference type="InterPro" id="IPR000999">
    <property type="entry name" value="RNase_III_dom"/>
</dbReference>
<dbReference type="InterPro" id="IPR036389">
    <property type="entry name" value="RNase_III_sf"/>
</dbReference>
<dbReference type="PANTHER" id="PTHR34276">
    <property type="entry name" value="MINI-RIBONUCLEASE 3"/>
    <property type="match status" value="1"/>
</dbReference>
<dbReference type="PANTHER" id="PTHR34276:SF1">
    <property type="entry name" value="MINI-RIBONUCLEASE 3"/>
    <property type="match status" value="1"/>
</dbReference>
<dbReference type="Pfam" id="PF00636">
    <property type="entry name" value="Ribonuclease_3"/>
    <property type="match status" value="1"/>
</dbReference>
<dbReference type="PIRSF" id="PIRSF005520">
    <property type="entry name" value="UCP005520"/>
    <property type="match status" value="1"/>
</dbReference>
<dbReference type="SMART" id="SM00535">
    <property type="entry name" value="RIBOc"/>
    <property type="match status" value="1"/>
</dbReference>
<dbReference type="SUPFAM" id="SSF69065">
    <property type="entry name" value="RNase III domain-like"/>
    <property type="match status" value="1"/>
</dbReference>